<evidence type="ECO:0000250" key="1">
    <source>
        <dbReference type="UniProtKB" id="Q6GQV0"/>
    </source>
</evidence>
<evidence type="ECO:0000250" key="2">
    <source>
        <dbReference type="UniProtKB" id="Q7L2K0"/>
    </source>
</evidence>
<evidence type="ECO:0000255" key="3"/>
<evidence type="ECO:0000256" key="4">
    <source>
        <dbReference type="SAM" id="MobiDB-lite"/>
    </source>
</evidence>
<evidence type="ECO:0000305" key="5"/>
<keyword id="KW-0966">Cell projection</keyword>
<keyword id="KW-0175">Coiled coil</keyword>
<keyword id="KW-0963">Cytoplasm</keyword>
<keyword id="KW-0206">Cytoskeleton</keyword>
<keyword id="KW-1185">Reference proteome</keyword>
<feature type="chain" id="PRO_0000286556" description="Tubulin epsilon and delta complex protein 2">
    <location>
        <begin position="1"/>
        <end position="443"/>
    </location>
</feature>
<feature type="region of interest" description="Disordered" evidence="4">
    <location>
        <begin position="45"/>
        <end position="72"/>
    </location>
</feature>
<feature type="region of interest" description="Disordered" evidence="4">
    <location>
        <begin position="93"/>
        <end position="146"/>
    </location>
</feature>
<feature type="coiled-coil region" evidence="3">
    <location>
        <begin position="8"/>
        <end position="33"/>
    </location>
</feature>
<feature type="compositionally biased region" description="Low complexity" evidence="4">
    <location>
        <begin position="106"/>
        <end position="124"/>
    </location>
</feature>
<dbReference type="EMBL" id="BC103103">
    <property type="protein sequence ID" value="AAI03104.2"/>
    <property type="molecule type" value="mRNA"/>
</dbReference>
<dbReference type="RefSeq" id="NP_001192308.1">
    <property type="nucleotide sequence ID" value="NM_001205379.1"/>
</dbReference>
<dbReference type="SMR" id="Q3ZBU3"/>
<dbReference type="FunCoup" id="Q3ZBU3">
    <property type="interactions" value="696"/>
</dbReference>
<dbReference type="PaxDb" id="9913-ENSBTAP00000034529"/>
<dbReference type="GeneID" id="616898"/>
<dbReference type="KEGG" id="bta:616898"/>
<dbReference type="CTD" id="80178"/>
<dbReference type="eggNOG" id="ENOG502S5GP">
    <property type="taxonomic scope" value="Eukaryota"/>
</dbReference>
<dbReference type="InParanoid" id="Q3ZBU3"/>
<dbReference type="OrthoDB" id="9939072at2759"/>
<dbReference type="Proteomes" id="UP000009136">
    <property type="component" value="Unplaced"/>
</dbReference>
<dbReference type="GO" id="GO:0005814">
    <property type="term" value="C:centriole"/>
    <property type="evidence" value="ECO:0000250"/>
    <property type="project" value="UniProtKB"/>
</dbReference>
<dbReference type="GO" id="GO:0005929">
    <property type="term" value="C:cilium"/>
    <property type="evidence" value="ECO:0000250"/>
    <property type="project" value="UniProtKB"/>
</dbReference>
<dbReference type="GO" id="GO:0005737">
    <property type="term" value="C:cytoplasm"/>
    <property type="evidence" value="ECO:0007669"/>
    <property type="project" value="UniProtKB-KW"/>
</dbReference>
<dbReference type="GO" id="GO:0045880">
    <property type="term" value="P:positive regulation of smoothened signaling pathway"/>
    <property type="evidence" value="ECO:0000250"/>
    <property type="project" value="UniProtKB"/>
</dbReference>
<dbReference type="InterPro" id="IPR031518">
    <property type="entry name" value="DUF4693"/>
</dbReference>
<dbReference type="PANTHER" id="PTHR14870">
    <property type="entry name" value="TUBULIN EPSILON AND DELTA COMPLEX PROTEIN 2"/>
    <property type="match status" value="1"/>
</dbReference>
<dbReference type="PANTHER" id="PTHR14870:SF1">
    <property type="entry name" value="TUBULIN EPSILON AND DELTA COMPLEX PROTEIN 2"/>
    <property type="match status" value="1"/>
</dbReference>
<dbReference type="Pfam" id="PF15764">
    <property type="entry name" value="DUF4693"/>
    <property type="match status" value="1"/>
</dbReference>
<sequence>MLPAECSRRLVAELRDALDSCAERQRQLEQSLRVSRRLLRVWEPAETPAPEPTPGSEINKEAPSSACPPSPQDLKELELLTQALEKAVRVRKGLSKAGEGVKARSLKSGSASTATKASAPPSTSRCTGSRAPETKPPRGVHHPWVPAKDLPGHRLLLVGDGAHMGQGAGANKPEAGLRDQQIVPQAASQVPEAFTLKDKGALLRLPEAFRKAASRNARLPMCASSLWAQLSSMQTRDSVDAAAATAKTQFLQKMQTAAGLPSSMLSAAEVGRLQKACSMLRLRMREELTADPKDWTQEYRSLLTLEGLQALAGQCLHRLQELQELRSAVVEQPQGPWPEGPPRAALPCGGGADPVWSPQLLLYSSTQELQTLAALRLRVAMLDQQVHLEKVLMAELLPLLSEQEPLGRPWLALCRAAHCLLCEGGQRFLTVLQDEPADRLSPP</sequence>
<comment type="function">
    <text evidence="1">Acts as a positive regulator of ciliary hedgehog signaling. Required for centriole stability.</text>
</comment>
<comment type="subunit">
    <text evidence="1">Interacts with TEDC1. Found in a complex with TEDC1, TEDC2, TUBE1 and TUBD1.</text>
</comment>
<comment type="subcellular location">
    <subcellularLocation>
        <location evidence="1">Cell projection</location>
        <location evidence="1">Cilium</location>
    </subcellularLocation>
    <subcellularLocation>
        <location evidence="1">Cytoplasm</location>
        <location evidence="1">Cytoskeleton</location>
        <location evidence="1">Microtubule organizing center</location>
        <location evidence="1">Centrosome</location>
        <location evidence="1">Centriole</location>
    </subcellularLocation>
</comment>
<proteinExistence type="evidence at transcript level"/>
<organism>
    <name type="scientific">Bos taurus</name>
    <name type="common">Bovine</name>
    <dbReference type="NCBI Taxonomy" id="9913"/>
    <lineage>
        <taxon>Eukaryota</taxon>
        <taxon>Metazoa</taxon>
        <taxon>Chordata</taxon>
        <taxon>Craniata</taxon>
        <taxon>Vertebrata</taxon>
        <taxon>Euteleostomi</taxon>
        <taxon>Mammalia</taxon>
        <taxon>Eutheria</taxon>
        <taxon>Laurasiatheria</taxon>
        <taxon>Artiodactyla</taxon>
        <taxon>Ruminantia</taxon>
        <taxon>Pecora</taxon>
        <taxon>Bovidae</taxon>
        <taxon>Bovinae</taxon>
        <taxon>Bos</taxon>
    </lineage>
</organism>
<accession>Q3ZBU3</accession>
<name>TEDC2_BOVIN</name>
<gene>
    <name evidence="2" type="primary">TEDC2</name>
</gene>
<protein>
    <recommendedName>
        <fullName evidence="5">Tubulin epsilon and delta complex protein 2</fullName>
    </recommendedName>
</protein>
<reference key="1">
    <citation type="submission" date="2005-08" db="EMBL/GenBank/DDBJ databases">
        <authorList>
            <consortium name="NIH - Mammalian Gene Collection (MGC) project"/>
        </authorList>
    </citation>
    <scope>NUCLEOTIDE SEQUENCE [LARGE SCALE MRNA]</scope>
    <source>
        <strain>Hereford</strain>
        <tissue>Hypothalamus</tissue>
    </source>
</reference>